<comment type="function">
    <text>Probable ion channel inhibitor.</text>
</comment>
<comment type="subcellular location">
    <subcellularLocation>
        <location evidence="1">Secreted</location>
    </subcellularLocation>
</comment>
<comment type="tissue specificity">
    <text>Expressed by the venom gland.</text>
</comment>
<comment type="domain">
    <text evidence="2">The presence of a 'disulfide through disulfide knot' structurally defines this protein as a knottin.</text>
</comment>
<comment type="similarity">
    <text evidence="3">Belongs to the neurotoxin 10 (Hwtx-1) family. 06 (F4b) subfamily.</text>
</comment>
<comment type="sequence caution" evidence="3">
    <conflict type="erroneous initiation">
        <sequence resource="EMBL-CDS" id="ABY71652"/>
    </conflict>
    <text>Truncated N-terminus.</text>
</comment>
<organism>
    <name type="scientific">Chilobrachys guangxiensis</name>
    <name type="common">Chinese earth tiger tarantula</name>
    <name type="synonym">Chilobrachys jingzhao</name>
    <dbReference type="NCBI Taxonomy" id="278060"/>
    <lineage>
        <taxon>Eukaryota</taxon>
        <taxon>Metazoa</taxon>
        <taxon>Ecdysozoa</taxon>
        <taxon>Arthropoda</taxon>
        <taxon>Chelicerata</taxon>
        <taxon>Arachnida</taxon>
        <taxon>Araneae</taxon>
        <taxon>Mygalomorphae</taxon>
        <taxon>Theraphosidae</taxon>
        <taxon>Chilobrachys</taxon>
    </lineage>
</organism>
<feature type="propeptide" id="PRO_0000398496" evidence="1">
    <location>
        <begin position="1" status="less than"/>
        <end position="19"/>
    </location>
</feature>
<feature type="peptide" id="PRO_0000398497" description="U2-theraphotoxin-Cg1a">
    <location>
        <begin position="20"/>
        <end position="55"/>
    </location>
</feature>
<feature type="disulfide bond" evidence="2">
    <location>
        <begin position="20"/>
        <end position="34"/>
    </location>
</feature>
<feature type="disulfide bond" evidence="2">
    <location>
        <begin position="27"/>
        <end position="39"/>
    </location>
</feature>
<feature type="disulfide bond" evidence="2">
    <location>
        <begin position="33"/>
        <end position="47"/>
    </location>
</feature>
<feature type="non-terminal residue">
    <location>
        <position position="1"/>
    </location>
</feature>
<name>JZT42_CHIGU</name>
<keyword id="KW-1015">Disulfide bond</keyword>
<keyword id="KW-0872">Ion channel impairing toxin</keyword>
<keyword id="KW-0960">Knottin</keyword>
<keyword id="KW-0964">Secreted</keyword>
<keyword id="KW-0800">Toxin</keyword>
<accession>B1P1A2</accession>
<evidence type="ECO:0000250" key="1"/>
<evidence type="ECO:0000250" key="2">
    <source>
        <dbReference type="UniProtKB" id="P0C247"/>
    </source>
</evidence>
<evidence type="ECO:0000305" key="3"/>
<dbReference type="EMBL" id="EU233833">
    <property type="protein sequence ID" value="ABY71652.1"/>
    <property type="status" value="ALT_INIT"/>
    <property type="molecule type" value="mRNA"/>
</dbReference>
<dbReference type="SMR" id="B1P1A2"/>
<dbReference type="ArachnoServer" id="AS000782">
    <property type="toxin name" value="U2-theraphotoxin-Cg1a"/>
</dbReference>
<dbReference type="GO" id="GO:0005576">
    <property type="term" value="C:extracellular region"/>
    <property type="evidence" value="ECO:0007669"/>
    <property type="project" value="UniProtKB-SubCell"/>
</dbReference>
<dbReference type="GO" id="GO:0008200">
    <property type="term" value="F:ion channel inhibitor activity"/>
    <property type="evidence" value="ECO:0007669"/>
    <property type="project" value="InterPro"/>
</dbReference>
<dbReference type="GO" id="GO:0090729">
    <property type="term" value="F:toxin activity"/>
    <property type="evidence" value="ECO:0007669"/>
    <property type="project" value="UniProtKB-KW"/>
</dbReference>
<dbReference type="InterPro" id="IPR011696">
    <property type="entry name" value="Huwentoxin-1"/>
</dbReference>
<dbReference type="Pfam" id="PF07740">
    <property type="entry name" value="Toxin_12"/>
    <property type="match status" value="1"/>
</dbReference>
<dbReference type="SUPFAM" id="SSF57059">
    <property type="entry name" value="omega toxin-like"/>
    <property type="match status" value="1"/>
</dbReference>
<reference key="1">
    <citation type="journal article" date="2008" name="Cell. Mol. Life Sci.">
        <title>Molecular diversity and evolution of cystine knot toxins of the tarantula Chilobrachys jingzhao.</title>
        <authorList>
            <person name="Chen J."/>
            <person name="Deng M."/>
            <person name="He Q."/>
            <person name="Meng E."/>
            <person name="Jiang L."/>
            <person name="Liao Z."/>
            <person name="Rong M."/>
            <person name="Liang S."/>
        </authorList>
    </citation>
    <scope>NUCLEOTIDE SEQUENCE [LARGE SCALE MRNA]</scope>
    <source>
        <tissue>Venom gland</tissue>
    </source>
</reference>
<protein>
    <recommendedName>
        <fullName>U2-theraphotoxin-Cg1a</fullName>
        <shortName>U2-TRTX-Cg1a</shortName>
    </recommendedName>
    <alternativeName>
        <fullName>Jingzhaotoxin-42</fullName>
        <shortName>JZTX-42</shortName>
    </alternativeName>
</protein>
<proteinExistence type="evidence at transcript level"/>
<sequence length="55" mass="6532">DSPAWLKSMERIFQSEERECRWMFGGCTTDSDCCEHLGCRWEKPSWCAWDGTVRK</sequence>